<proteinExistence type="inferred from homology"/>
<comment type="function">
    <text evidence="1">Catalyzes the reversible phosphorylation of UMP to UDP.</text>
</comment>
<comment type="catalytic activity">
    <reaction evidence="1">
        <text>UMP + ATP = UDP + ADP</text>
        <dbReference type="Rhea" id="RHEA:24400"/>
        <dbReference type="ChEBI" id="CHEBI:30616"/>
        <dbReference type="ChEBI" id="CHEBI:57865"/>
        <dbReference type="ChEBI" id="CHEBI:58223"/>
        <dbReference type="ChEBI" id="CHEBI:456216"/>
        <dbReference type="EC" id="2.7.4.22"/>
    </reaction>
</comment>
<comment type="activity regulation">
    <text evidence="1">Inhibited by UTP.</text>
</comment>
<comment type="pathway">
    <text evidence="1">Pyrimidine metabolism; CTP biosynthesis via de novo pathway; UDP from UMP (UMPK route): step 1/1.</text>
</comment>
<comment type="subunit">
    <text evidence="1">Homohexamer.</text>
</comment>
<comment type="subcellular location">
    <subcellularLocation>
        <location evidence="1">Cytoplasm</location>
    </subcellularLocation>
</comment>
<comment type="similarity">
    <text evidence="1">Belongs to the UMP kinase family.</text>
</comment>
<name>PYRH_NEIG1</name>
<protein>
    <recommendedName>
        <fullName evidence="1">Uridylate kinase</fullName>
        <shortName evidence="1">UK</shortName>
        <ecNumber evidence="1">2.7.4.22</ecNumber>
    </recommendedName>
    <alternativeName>
        <fullName evidence="1">Uridine monophosphate kinase</fullName>
        <shortName evidence="1">UMP kinase</shortName>
        <shortName evidence="1">UMPK</shortName>
    </alternativeName>
</protein>
<reference key="1">
    <citation type="submission" date="2003-03" db="EMBL/GenBank/DDBJ databases">
        <title>The complete genome sequence of Neisseria gonorrhoeae.</title>
        <authorList>
            <person name="Lewis L.A."/>
            <person name="Gillaspy A.F."/>
            <person name="McLaughlin R.E."/>
            <person name="Gipson M."/>
            <person name="Ducey T.F."/>
            <person name="Ownbey T."/>
            <person name="Hartman K."/>
            <person name="Nydick C."/>
            <person name="Carson M.B."/>
            <person name="Vaughn J."/>
            <person name="Thomson C."/>
            <person name="Song L."/>
            <person name="Lin S."/>
            <person name="Yuan X."/>
            <person name="Najar F."/>
            <person name="Zhan M."/>
            <person name="Ren Q."/>
            <person name="Zhu H."/>
            <person name="Qi S."/>
            <person name="Kenton S.M."/>
            <person name="Lai H."/>
            <person name="White J.D."/>
            <person name="Clifton S."/>
            <person name="Roe B.A."/>
            <person name="Dyer D.W."/>
        </authorList>
    </citation>
    <scope>NUCLEOTIDE SEQUENCE [LARGE SCALE GENOMIC DNA]</scope>
    <source>
        <strain>ATCC 700825 / FA 1090</strain>
    </source>
</reference>
<evidence type="ECO:0000255" key="1">
    <source>
        <dbReference type="HAMAP-Rule" id="MF_01220"/>
    </source>
</evidence>
<organism>
    <name type="scientific">Neisseria gonorrhoeae (strain ATCC 700825 / FA 1090)</name>
    <dbReference type="NCBI Taxonomy" id="242231"/>
    <lineage>
        <taxon>Bacteria</taxon>
        <taxon>Pseudomonadati</taxon>
        <taxon>Pseudomonadota</taxon>
        <taxon>Betaproteobacteria</taxon>
        <taxon>Neisseriales</taxon>
        <taxon>Neisseriaceae</taxon>
        <taxon>Neisseria</taxon>
    </lineage>
</organism>
<accession>Q5F5F5</accession>
<feature type="chain" id="PRO_1000053965" description="Uridylate kinase">
    <location>
        <begin position="1"/>
        <end position="239"/>
    </location>
</feature>
<feature type="binding site" evidence="1">
    <location>
        <begin position="13"/>
        <end position="16"/>
    </location>
    <ligand>
        <name>ATP</name>
        <dbReference type="ChEBI" id="CHEBI:30616"/>
    </ligand>
</feature>
<feature type="binding site" evidence="1">
    <location>
        <position position="55"/>
    </location>
    <ligand>
        <name>UMP</name>
        <dbReference type="ChEBI" id="CHEBI:57865"/>
    </ligand>
</feature>
<feature type="binding site" evidence="1">
    <location>
        <position position="56"/>
    </location>
    <ligand>
        <name>ATP</name>
        <dbReference type="ChEBI" id="CHEBI:30616"/>
    </ligand>
</feature>
<feature type="binding site" evidence="1">
    <location>
        <position position="60"/>
    </location>
    <ligand>
        <name>ATP</name>
        <dbReference type="ChEBI" id="CHEBI:30616"/>
    </ligand>
</feature>
<feature type="binding site" evidence="1">
    <location>
        <position position="75"/>
    </location>
    <ligand>
        <name>UMP</name>
        <dbReference type="ChEBI" id="CHEBI:57865"/>
    </ligand>
</feature>
<feature type="binding site" evidence="1">
    <location>
        <begin position="136"/>
        <end position="143"/>
    </location>
    <ligand>
        <name>UMP</name>
        <dbReference type="ChEBI" id="CHEBI:57865"/>
    </ligand>
</feature>
<feature type="binding site" evidence="1">
    <location>
        <position position="163"/>
    </location>
    <ligand>
        <name>ATP</name>
        <dbReference type="ChEBI" id="CHEBI:30616"/>
    </ligand>
</feature>
<feature type="binding site" evidence="1">
    <location>
        <position position="164"/>
    </location>
    <ligand>
        <name>ATP</name>
        <dbReference type="ChEBI" id="CHEBI:30616"/>
    </ligand>
</feature>
<feature type="binding site" evidence="1">
    <location>
        <position position="169"/>
    </location>
    <ligand>
        <name>ATP</name>
        <dbReference type="ChEBI" id="CHEBI:30616"/>
    </ligand>
</feature>
<feature type="binding site" evidence="1">
    <location>
        <position position="172"/>
    </location>
    <ligand>
        <name>ATP</name>
        <dbReference type="ChEBI" id="CHEBI:30616"/>
    </ligand>
</feature>
<gene>
    <name evidence="1" type="primary">pyrH</name>
    <name type="ordered locus">NGO_1973</name>
</gene>
<sequence length="239" mass="25714">MTQQIKYKRVLLKLSGESLMGSDPFGINHDTIVQTVGEIAEIVKMGVQVGIVVGGGNIFRGVSAQAGSMDRATADYMGMMATVMNALALKDAFETLGIKARVQSALSMQQIAETYARPKAIQYLEEGKVVIFAAGTGNPFFTTDTAAALRGAEMNCDVMLKATNVDGVYTADPKKDPSATRYETITFDEALNKNLKVMDATAFALCRERKLNIVVFGIAKQGSLKRVITGEDEGTLVHC</sequence>
<dbReference type="EC" id="2.7.4.22" evidence="1"/>
<dbReference type="EMBL" id="AE004969">
    <property type="protein sequence ID" value="AAW90582.1"/>
    <property type="molecule type" value="Genomic_DNA"/>
</dbReference>
<dbReference type="RefSeq" id="WP_003686859.1">
    <property type="nucleotide sequence ID" value="NC_002946.2"/>
</dbReference>
<dbReference type="RefSeq" id="YP_208994.1">
    <property type="nucleotide sequence ID" value="NC_002946.2"/>
</dbReference>
<dbReference type="SMR" id="Q5F5F5"/>
<dbReference type="STRING" id="242231.NGO_1973"/>
<dbReference type="GeneID" id="66754140"/>
<dbReference type="KEGG" id="ngo:NGO_1973"/>
<dbReference type="PATRIC" id="fig|242231.10.peg.2382"/>
<dbReference type="HOGENOM" id="CLU_033861_0_0_4"/>
<dbReference type="UniPathway" id="UPA00159">
    <property type="reaction ID" value="UER00275"/>
</dbReference>
<dbReference type="Proteomes" id="UP000000535">
    <property type="component" value="Chromosome"/>
</dbReference>
<dbReference type="GO" id="GO:0005829">
    <property type="term" value="C:cytosol"/>
    <property type="evidence" value="ECO:0007669"/>
    <property type="project" value="TreeGrafter"/>
</dbReference>
<dbReference type="GO" id="GO:0005524">
    <property type="term" value="F:ATP binding"/>
    <property type="evidence" value="ECO:0007669"/>
    <property type="project" value="UniProtKB-KW"/>
</dbReference>
<dbReference type="GO" id="GO:0033862">
    <property type="term" value="F:UMP kinase activity"/>
    <property type="evidence" value="ECO:0007669"/>
    <property type="project" value="UniProtKB-EC"/>
</dbReference>
<dbReference type="GO" id="GO:0044210">
    <property type="term" value="P:'de novo' CTP biosynthetic process"/>
    <property type="evidence" value="ECO:0007669"/>
    <property type="project" value="UniProtKB-UniRule"/>
</dbReference>
<dbReference type="GO" id="GO:0006225">
    <property type="term" value="P:UDP biosynthetic process"/>
    <property type="evidence" value="ECO:0007669"/>
    <property type="project" value="TreeGrafter"/>
</dbReference>
<dbReference type="CDD" id="cd04254">
    <property type="entry name" value="AAK_UMPK-PyrH-Ec"/>
    <property type="match status" value="1"/>
</dbReference>
<dbReference type="FunFam" id="3.40.1160.10:FF:000001">
    <property type="entry name" value="Uridylate kinase"/>
    <property type="match status" value="1"/>
</dbReference>
<dbReference type="Gene3D" id="3.40.1160.10">
    <property type="entry name" value="Acetylglutamate kinase-like"/>
    <property type="match status" value="1"/>
</dbReference>
<dbReference type="HAMAP" id="MF_01220_B">
    <property type="entry name" value="PyrH_B"/>
    <property type="match status" value="1"/>
</dbReference>
<dbReference type="InterPro" id="IPR036393">
    <property type="entry name" value="AceGlu_kinase-like_sf"/>
</dbReference>
<dbReference type="InterPro" id="IPR001048">
    <property type="entry name" value="Asp/Glu/Uridylate_kinase"/>
</dbReference>
<dbReference type="InterPro" id="IPR011817">
    <property type="entry name" value="Uridylate_kinase"/>
</dbReference>
<dbReference type="InterPro" id="IPR015963">
    <property type="entry name" value="Uridylate_kinase_bac"/>
</dbReference>
<dbReference type="NCBIfam" id="TIGR02075">
    <property type="entry name" value="pyrH_bact"/>
    <property type="match status" value="1"/>
</dbReference>
<dbReference type="PANTHER" id="PTHR42833">
    <property type="entry name" value="URIDYLATE KINASE"/>
    <property type="match status" value="1"/>
</dbReference>
<dbReference type="PANTHER" id="PTHR42833:SF4">
    <property type="entry name" value="URIDYLATE KINASE PUMPKIN, CHLOROPLASTIC"/>
    <property type="match status" value="1"/>
</dbReference>
<dbReference type="Pfam" id="PF00696">
    <property type="entry name" value="AA_kinase"/>
    <property type="match status" value="1"/>
</dbReference>
<dbReference type="PIRSF" id="PIRSF005650">
    <property type="entry name" value="Uridylate_kin"/>
    <property type="match status" value="1"/>
</dbReference>
<dbReference type="SUPFAM" id="SSF53633">
    <property type="entry name" value="Carbamate kinase-like"/>
    <property type="match status" value="1"/>
</dbReference>
<keyword id="KW-0067">ATP-binding</keyword>
<keyword id="KW-0963">Cytoplasm</keyword>
<keyword id="KW-0418">Kinase</keyword>
<keyword id="KW-0547">Nucleotide-binding</keyword>
<keyword id="KW-0665">Pyrimidine biosynthesis</keyword>
<keyword id="KW-1185">Reference proteome</keyword>
<keyword id="KW-0808">Transferase</keyword>